<gene>
    <name type="ordered locus">RHOS4_29700</name>
    <name type="ORF">RSP_1358</name>
</gene>
<proteinExistence type="inferred from homology"/>
<dbReference type="EMBL" id="CP000143">
    <property type="protein sequence ID" value="ABA80538.1"/>
    <property type="molecule type" value="Genomic_DNA"/>
</dbReference>
<dbReference type="RefSeq" id="WP_011338905.1">
    <property type="nucleotide sequence ID" value="NC_007493.2"/>
</dbReference>
<dbReference type="RefSeq" id="YP_354439.1">
    <property type="nucleotide sequence ID" value="NC_007493.2"/>
</dbReference>
<dbReference type="SMR" id="Q3IY46"/>
<dbReference type="STRING" id="272943.RSP_1358"/>
<dbReference type="EnsemblBacteria" id="ABA80538">
    <property type="protein sequence ID" value="ABA80538"/>
    <property type="gene ID" value="RSP_1358"/>
</dbReference>
<dbReference type="GeneID" id="3720804"/>
<dbReference type="KEGG" id="rsp:RSP_1358"/>
<dbReference type="PATRIC" id="fig|272943.9.peg.3341"/>
<dbReference type="eggNOG" id="COG3022">
    <property type="taxonomic scope" value="Bacteria"/>
</dbReference>
<dbReference type="OrthoDB" id="9777133at2"/>
<dbReference type="PhylomeDB" id="Q3IY46"/>
<dbReference type="Proteomes" id="UP000002703">
    <property type="component" value="Chromosome 1"/>
</dbReference>
<dbReference type="GO" id="GO:0005829">
    <property type="term" value="C:cytosol"/>
    <property type="evidence" value="ECO:0007669"/>
    <property type="project" value="TreeGrafter"/>
</dbReference>
<dbReference type="GO" id="GO:0033194">
    <property type="term" value="P:response to hydroperoxide"/>
    <property type="evidence" value="ECO:0007669"/>
    <property type="project" value="TreeGrafter"/>
</dbReference>
<dbReference type="HAMAP" id="MF_00652">
    <property type="entry name" value="UPF0246"/>
    <property type="match status" value="1"/>
</dbReference>
<dbReference type="InterPro" id="IPR005583">
    <property type="entry name" value="YaaA"/>
</dbReference>
<dbReference type="NCBIfam" id="NF002542">
    <property type="entry name" value="PRK02101.1-3"/>
    <property type="match status" value="1"/>
</dbReference>
<dbReference type="PANTHER" id="PTHR30283:SF4">
    <property type="entry name" value="PEROXIDE STRESS RESISTANCE PROTEIN YAAA"/>
    <property type="match status" value="1"/>
</dbReference>
<dbReference type="PANTHER" id="PTHR30283">
    <property type="entry name" value="PEROXIDE STRESS RESPONSE PROTEIN YAAA"/>
    <property type="match status" value="1"/>
</dbReference>
<dbReference type="Pfam" id="PF03883">
    <property type="entry name" value="H2O2_YaaD"/>
    <property type="match status" value="1"/>
</dbReference>
<evidence type="ECO:0000255" key="1">
    <source>
        <dbReference type="HAMAP-Rule" id="MF_00652"/>
    </source>
</evidence>
<feature type="chain" id="PRO_0000262048" description="UPF0246 protein RHOS4_29700">
    <location>
        <begin position="1"/>
        <end position="257"/>
    </location>
</feature>
<keyword id="KW-1185">Reference proteome</keyword>
<sequence length="257" mass="28456">MLAVLSPAKRLAAQPALDLPADLAPSEPRLQDQADALARVARDLTAADLRRLMHISEPLARLNVARFAEFHEARNAAVPAVALFDGDTYAGLEARTMDADALRWAQERICILSGLYGLLRPLDRIQPHRLEMGTRLATERGATLYDFWGDRIAEALNARAAETGARVLVNCASVEYFTAADRAALKLPVITPTFLEERNGERKIVSFWAKRARGAMARFIAENRLDDPEDLRAFRAGGYAYEPDLSTDERPVFLRAG</sequence>
<name>Y2970_CERS4</name>
<comment type="similarity">
    <text evidence="1">Belongs to the UPF0246 family.</text>
</comment>
<accession>Q3IY46</accession>
<reference key="1">
    <citation type="submission" date="2005-09" db="EMBL/GenBank/DDBJ databases">
        <title>Complete sequence of chromosome 1 of Rhodobacter sphaeroides 2.4.1.</title>
        <authorList>
            <person name="Copeland A."/>
            <person name="Lucas S."/>
            <person name="Lapidus A."/>
            <person name="Barry K."/>
            <person name="Detter J.C."/>
            <person name="Glavina T."/>
            <person name="Hammon N."/>
            <person name="Israni S."/>
            <person name="Pitluck S."/>
            <person name="Richardson P."/>
            <person name="Mackenzie C."/>
            <person name="Choudhary M."/>
            <person name="Larimer F."/>
            <person name="Hauser L.J."/>
            <person name="Land M."/>
            <person name="Donohue T.J."/>
            <person name="Kaplan S."/>
        </authorList>
    </citation>
    <scope>NUCLEOTIDE SEQUENCE [LARGE SCALE GENOMIC DNA]</scope>
    <source>
        <strain>ATCC 17023 / DSM 158 / JCM 6121 / CCUG 31486 / LMG 2827 / NBRC 12203 / NCIMB 8253 / ATH 2.4.1.</strain>
    </source>
</reference>
<organism>
    <name type="scientific">Cereibacter sphaeroides (strain ATCC 17023 / DSM 158 / JCM 6121 / CCUG 31486 / LMG 2827 / NBRC 12203 / NCIMB 8253 / ATH 2.4.1.)</name>
    <name type="common">Rhodobacter sphaeroides</name>
    <dbReference type="NCBI Taxonomy" id="272943"/>
    <lineage>
        <taxon>Bacteria</taxon>
        <taxon>Pseudomonadati</taxon>
        <taxon>Pseudomonadota</taxon>
        <taxon>Alphaproteobacteria</taxon>
        <taxon>Rhodobacterales</taxon>
        <taxon>Paracoccaceae</taxon>
        <taxon>Cereibacter</taxon>
    </lineage>
</organism>
<protein>
    <recommendedName>
        <fullName evidence="1">UPF0246 protein RHOS4_29700</fullName>
    </recommendedName>
</protein>